<reference key="1">
    <citation type="journal article" date="2005" name="Nat. Genet.">
        <title>The complete genome sequence of Francisella tularensis, the causative agent of tularemia.</title>
        <authorList>
            <person name="Larsson P."/>
            <person name="Oyston P.C.F."/>
            <person name="Chain P."/>
            <person name="Chu M.C."/>
            <person name="Duffield M."/>
            <person name="Fuxelius H.-H."/>
            <person name="Garcia E."/>
            <person name="Haelltorp G."/>
            <person name="Johansson D."/>
            <person name="Isherwood K.E."/>
            <person name="Karp P.D."/>
            <person name="Larsson E."/>
            <person name="Liu Y."/>
            <person name="Michell S."/>
            <person name="Prior J."/>
            <person name="Prior R."/>
            <person name="Malfatti S."/>
            <person name="Sjoestedt A."/>
            <person name="Svensson K."/>
            <person name="Thompson N."/>
            <person name="Vergez L."/>
            <person name="Wagg J.K."/>
            <person name="Wren B.W."/>
            <person name="Lindler L.E."/>
            <person name="Andersson S.G.E."/>
            <person name="Forsman M."/>
            <person name="Titball R.W."/>
        </authorList>
    </citation>
    <scope>NUCLEOTIDE SEQUENCE [LARGE SCALE GENOMIC DNA]</scope>
    <source>
        <strain>SCHU S4 / Schu 4</strain>
    </source>
</reference>
<accession>Q5NHK3</accession>
<comment type="function">
    <text evidence="1">Cell wall formation. Catalyzes the addition of glutamate to the nucleotide precursor UDP-N-acetylmuramoyl-L-alanine (UMA).</text>
</comment>
<comment type="catalytic activity">
    <reaction evidence="1">
        <text>UDP-N-acetyl-alpha-D-muramoyl-L-alanine + D-glutamate + ATP = UDP-N-acetyl-alpha-D-muramoyl-L-alanyl-D-glutamate + ADP + phosphate + H(+)</text>
        <dbReference type="Rhea" id="RHEA:16429"/>
        <dbReference type="ChEBI" id="CHEBI:15378"/>
        <dbReference type="ChEBI" id="CHEBI:29986"/>
        <dbReference type="ChEBI" id="CHEBI:30616"/>
        <dbReference type="ChEBI" id="CHEBI:43474"/>
        <dbReference type="ChEBI" id="CHEBI:83898"/>
        <dbReference type="ChEBI" id="CHEBI:83900"/>
        <dbReference type="ChEBI" id="CHEBI:456216"/>
        <dbReference type="EC" id="6.3.2.9"/>
    </reaction>
</comment>
<comment type="pathway">
    <text evidence="1">Cell wall biogenesis; peptidoglycan biosynthesis.</text>
</comment>
<comment type="subcellular location">
    <subcellularLocation>
        <location evidence="1">Cytoplasm</location>
    </subcellularLocation>
</comment>
<comment type="similarity">
    <text evidence="1">Belongs to the MurCDEF family.</text>
</comment>
<sequence length="416" mass="46825">MFSFYFNDNKITKLLMVGYGSTGKSVCDFLANFIDITVDISQNDDEFVNYDLNSYDLITVSPGIPLNKSPYRALTKFKDKIVSDIDIFYQYIKDTKAKTIAVTGSNGKSTVVTMTDFVLKDLGYKSILVGNIGTPALNKIGEKFDYCVVEVSSFQINLFNCVRFDLGCIINVSPDHLDRYQNFEQYKQSKLNLAKFSNDFFVYDVHNGIKYAGEYQIIRGAIYRNSTKLLDIVETKLFGEHNLENIIVVLNILDRLGLDINQAIDSIKKFKGLEHRCKIVKKVNSTTYINDSKGTNVGATIAALNSITNSKNIILLLGGVAKGGDFSLMIKSLDKYVKYVYIYGADKEYIESYIKGYCKYQLCNNMKQAFELSSQKANSNEIVLLSPACASFDEFSGYAQRGEVFQNLVAQLEQKS</sequence>
<protein>
    <recommendedName>
        <fullName evidence="1">UDP-N-acetylmuramoylalanine--D-glutamate ligase</fullName>
        <ecNumber evidence="1">6.3.2.9</ecNumber>
    </recommendedName>
    <alternativeName>
        <fullName evidence="1">D-glutamic acid-adding enzyme</fullName>
    </alternativeName>
    <alternativeName>
        <fullName evidence="1">UDP-N-acetylmuramoyl-L-alanyl-D-glutamate synthetase</fullName>
    </alternativeName>
</protein>
<dbReference type="EC" id="6.3.2.9" evidence="1"/>
<dbReference type="EMBL" id="AJ749949">
    <property type="protein sequence ID" value="CAG45084.1"/>
    <property type="molecule type" value="Genomic_DNA"/>
</dbReference>
<dbReference type="RefSeq" id="WP_003020220.1">
    <property type="nucleotide sequence ID" value="NC_006570.2"/>
</dbReference>
<dbReference type="RefSeq" id="YP_169489.1">
    <property type="nucleotide sequence ID" value="NC_006570.2"/>
</dbReference>
<dbReference type="SMR" id="Q5NHK3"/>
<dbReference type="STRING" id="177416.FTT_0451"/>
<dbReference type="DNASU" id="3191954"/>
<dbReference type="EnsemblBacteria" id="CAG45084">
    <property type="protein sequence ID" value="CAG45084"/>
    <property type="gene ID" value="FTT_0451"/>
</dbReference>
<dbReference type="KEGG" id="ftu:FTT_0451"/>
<dbReference type="eggNOG" id="COG0771">
    <property type="taxonomic scope" value="Bacteria"/>
</dbReference>
<dbReference type="OrthoDB" id="9809796at2"/>
<dbReference type="UniPathway" id="UPA00219"/>
<dbReference type="Proteomes" id="UP000001174">
    <property type="component" value="Chromosome"/>
</dbReference>
<dbReference type="GO" id="GO:0005737">
    <property type="term" value="C:cytoplasm"/>
    <property type="evidence" value="ECO:0007669"/>
    <property type="project" value="UniProtKB-SubCell"/>
</dbReference>
<dbReference type="GO" id="GO:0005524">
    <property type="term" value="F:ATP binding"/>
    <property type="evidence" value="ECO:0007669"/>
    <property type="project" value="UniProtKB-UniRule"/>
</dbReference>
<dbReference type="GO" id="GO:0008764">
    <property type="term" value="F:UDP-N-acetylmuramoylalanine-D-glutamate ligase activity"/>
    <property type="evidence" value="ECO:0007669"/>
    <property type="project" value="UniProtKB-UniRule"/>
</dbReference>
<dbReference type="GO" id="GO:0051301">
    <property type="term" value="P:cell division"/>
    <property type="evidence" value="ECO:0007669"/>
    <property type="project" value="UniProtKB-KW"/>
</dbReference>
<dbReference type="GO" id="GO:0071555">
    <property type="term" value="P:cell wall organization"/>
    <property type="evidence" value="ECO:0007669"/>
    <property type="project" value="UniProtKB-KW"/>
</dbReference>
<dbReference type="GO" id="GO:0009252">
    <property type="term" value="P:peptidoglycan biosynthetic process"/>
    <property type="evidence" value="ECO:0007669"/>
    <property type="project" value="UniProtKB-UniRule"/>
</dbReference>
<dbReference type="GO" id="GO:0008360">
    <property type="term" value="P:regulation of cell shape"/>
    <property type="evidence" value="ECO:0007669"/>
    <property type="project" value="UniProtKB-KW"/>
</dbReference>
<dbReference type="Gene3D" id="3.90.190.20">
    <property type="entry name" value="Mur ligase, C-terminal domain"/>
    <property type="match status" value="1"/>
</dbReference>
<dbReference type="Gene3D" id="3.40.1190.10">
    <property type="entry name" value="Mur-like, catalytic domain"/>
    <property type="match status" value="1"/>
</dbReference>
<dbReference type="HAMAP" id="MF_00639">
    <property type="entry name" value="MurD"/>
    <property type="match status" value="1"/>
</dbReference>
<dbReference type="InterPro" id="IPR036565">
    <property type="entry name" value="Mur-like_cat_sf"/>
</dbReference>
<dbReference type="InterPro" id="IPR004101">
    <property type="entry name" value="Mur_ligase_C"/>
</dbReference>
<dbReference type="InterPro" id="IPR036615">
    <property type="entry name" value="Mur_ligase_C_dom_sf"/>
</dbReference>
<dbReference type="InterPro" id="IPR013221">
    <property type="entry name" value="Mur_ligase_cen"/>
</dbReference>
<dbReference type="InterPro" id="IPR005762">
    <property type="entry name" value="MurD"/>
</dbReference>
<dbReference type="NCBIfam" id="TIGR01087">
    <property type="entry name" value="murD"/>
    <property type="match status" value="1"/>
</dbReference>
<dbReference type="PANTHER" id="PTHR43692">
    <property type="entry name" value="UDP-N-ACETYLMURAMOYLALANINE--D-GLUTAMATE LIGASE"/>
    <property type="match status" value="1"/>
</dbReference>
<dbReference type="PANTHER" id="PTHR43692:SF1">
    <property type="entry name" value="UDP-N-ACETYLMURAMOYLALANINE--D-GLUTAMATE LIGASE"/>
    <property type="match status" value="1"/>
</dbReference>
<dbReference type="Pfam" id="PF02875">
    <property type="entry name" value="Mur_ligase_C"/>
    <property type="match status" value="1"/>
</dbReference>
<dbReference type="Pfam" id="PF08245">
    <property type="entry name" value="Mur_ligase_M"/>
    <property type="match status" value="1"/>
</dbReference>
<dbReference type="SUPFAM" id="SSF53623">
    <property type="entry name" value="MurD-like peptide ligases, catalytic domain"/>
    <property type="match status" value="1"/>
</dbReference>
<dbReference type="SUPFAM" id="SSF53244">
    <property type="entry name" value="MurD-like peptide ligases, peptide-binding domain"/>
    <property type="match status" value="1"/>
</dbReference>
<proteinExistence type="inferred from homology"/>
<gene>
    <name evidence="1" type="primary">murD</name>
    <name type="ordered locus">FTT_0451</name>
</gene>
<evidence type="ECO:0000255" key="1">
    <source>
        <dbReference type="HAMAP-Rule" id="MF_00639"/>
    </source>
</evidence>
<keyword id="KW-0067">ATP-binding</keyword>
<keyword id="KW-0131">Cell cycle</keyword>
<keyword id="KW-0132">Cell division</keyword>
<keyword id="KW-0133">Cell shape</keyword>
<keyword id="KW-0961">Cell wall biogenesis/degradation</keyword>
<keyword id="KW-0963">Cytoplasm</keyword>
<keyword id="KW-0436">Ligase</keyword>
<keyword id="KW-0547">Nucleotide-binding</keyword>
<keyword id="KW-0573">Peptidoglycan synthesis</keyword>
<keyword id="KW-1185">Reference proteome</keyword>
<feature type="chain" id="PRO_0000109016" description="UDP-N-acetylmuramoylalanine--D-glutamate ligase">
    <location>
        <begin position="1"/>
        <end position="416"/>
    </location>
</feature>
<feature type="binding site" evidence="1">
    <location>
        <begin position="104"/>
        <end position="110"/>
    </location>
    <ligand>
        <name>ATP</name>
        <dbReference type="ChEBI" id="CHEBI:30616"/>
    </ligand>
</feature>
<name>MURD_FRATT</name>
<organism>
    <name type="scientific">Francisella tularensis subsp. tularensis (strain SCHU S4 / Schu 4)</name>
    <dbReference type="NCBI Taxonomy" id="177416"/>
    <lineage>
        <taxon>Bacteria</taxon>
        <taxon>Pseudomonadati</taxon>
        <taxon>Pseudomonadota</taxon>
        <taxon>Gammaproteobacteria</taxon>
        <taxon>Thiotrichales</taxon>
        <taxon>Francisellaceae</taxon>
        <taxon>Francisella</taxon>
    </lineage>
</organism>